<gene>
    <name evidence="2" type="primary">rpsL</name>
    <name type="ordered locus">YpAngola_A3678</name>
</gene>
<keyword id="KW-0488">Methylation</keyword>
<keyword id="KW-0687">Ribonucleoprotein</keyword>
<keyword id="KW-0689">Ribosomal protein</keyword>
<keyword id="KW-0694">RNA-binding</keyword>
<keyword id="KW-0699">rRNA-binding</keyword>
<keyword id="KW-0820">tRNA-binding</keyword>
<sequence length="124" mass="13730">MATINQLVRKPRSMKVAKSNVPALEACPQKRGVCTRVYTTTPKKPNSALRKVCRVRLTNGFEVTSYIGGEGHNLQEHSVILIRGGRVKDLPGVRYHTVRGALDCSGVKDRKQSRSKYGVKKPKA</sequence>
<feature type="chain" id="PRO_1000123542" description="Small ribosomal subunit protein uS12">
    <location>
        <begin position="1"/>
        <end position="124"/>
    </location>
</feature>
<feature type="modified residue" description="3-methylthioaspartic acid" evidence="1">
    <location>
        <position position="89"/>
    </location>
</feature>
<reference key="1">
    <citation type="journal article" date="2010" name="J. Bacteriol.">
        <title>Genome sequence of the deep-rooted Yersinia pestis strain Angola reveals new insights into the evolution and pangenome of the plague bacterium.</title>
        <authorList>
            <person name="Eppinger M."/>
            <person name="Worsham P.L."/>
            <person name="Nikolich M.P."/>
            <person name="Riley D.R."/>
            <person name="Sebastian Y."/>
            <person name="Mou S."/>
            <person name="Achtman M."/>
            <person name="Lindler L.E."/>
            <person name="Ravel J."/>
        </authorList>
    </citation>
    <scope>NUCLEOTIDE SEQUENCE [LARGE SCALE GENOMIC DNA]</scope>
    <source>
        <strain>Angola</strain>
    </source>
</reference>
<protein>
    <recommendedName>
        <fullName evidence="2">Small ribosomal subunit protein uS12</fullName>
    </recommendedName>
    <alternativeName>
        <fullName evidence="3">30S ribosomal protein S12</fullName>
    </alternativeName>
</protein>
<organism>
    <name type="scientific">Yersinia pestis bv. Antiqua (strain Angola)</name>
    <dbReference type="NCBI Taxonomy" id="349746"/>
    <lineage>
        <taxon>Bacteria</taxon>
        <taxon>Pseudomonadati</taxon>
        <taxon>Pseudomonadota</taxon>
        <taxon>Gammaproteobacteria</taxon>
        <taxon>Enterobacterales</taxon>
        <taxon>Yersiniaceae</taxon>
        <taxon>Yersinia</taxon>
    </lineage>
</organism>
<proteinExistence type="inferred from homology"/>
<accession>A9R464</accession>
<dbReference type="EMBL" id="CP000901">
    <property type="protein sequence ID" value="ABX87967.1"/>
    <property type="molecule type" value="Genomic_DNA"/>
</dbReference>
<dbReference type="RefSeq" id="WP_002212323.1">
    <property type="nucleotide sequence ID" value="NZ_CP009935.1"/>
</dbReference>
<dbReference type="SMR" id="A9R464"/>
<dbReference type="GeneID" id="97454224"/>
<dbReference type="KEGG" id="ypg:YpAngola_A3678"/>
<dbReference type="PATRIC" id="fig|349746.12.peg.383"/>
<dbReference type="GO" id="GO:0015935">
    <property type="term" value="C:small ribosomal subunit"/>
    <property type="evidence" value="ECO:0007669"/>
    <property type="project" value="InterPro"/>
</dbReference>
<dbReference type="GO" id="GO:0019843">
    <property type="term" value="F:rRNA binding"/>
    <property type="evidence" value="ECO:0007669"/>
    <property type="project" value="UniProtKB-UniRule"/>
</dbReference>
<dbReference type="GO" id="GO:0003735">
    <property type="term" value="F:structural constituent of ribosome"/>
    <property type="evidence" value="ECO:0007669"/>
    <property type="project" value="InterPro"/>
</dbReference>
<dbReference type="GO" id="GO:0000049">
    <property type="term" value="F:tRNA binding"/>
    <property type="evidence" value="ECO:0007669"/>
    <property type="project" value="UniProtKB-UniRule"/>
</dbReference>
<dbReference type="GO" id="GO:0006412">
    <property type="term" value="P:translation"/>
    <property type="evidence" value="ECO:0007669"/>
    <property type="project" value="UniProtKB-UniRule"/>
</dbReference>
<dbReference type="CDD" id="cd03368">
    <property type="entry name" value="Ribosomal_S12"/>
    <property type="match status" value="1"/>
</dbReference>
<dbReference type="FunFam" id="2.40.50.140:FF:000001">
    <property type="entry name" value="30S ribosomal protein S12"/>
    <property type="match status" value="1"/>
</dbReference>
<dbReference type="Gene3D" id="2.40.50.140">
    <property type="entry name" value="Nucleic acid-binding proteins"/>
    <property type="match status" value="1"/>
</dbReference>
<dbReference type="HAMAP" id="MF_00403_B">
    <property type="entry name" value="Ribosomal_uS12_B"/>
    <property type="match status" value="1"/>
</dbReference>
<dbReference type="InterPro" id="IPR012340">
    <property type="entry name" value="NA-bd_OB-fold"/>
</dbReference>
<dbReference type="InterPro" id="IPR006032">
    <property type="entry name" value="Ribosomal_uS12"/>
</dbReference>
<dbReference type="InterPro" id="IPR005679">
    <property type="entry name" value="Ribosomal_uS12_bac"/>
</dbReference>
<dbReference type="NCBIfam" id="TIGR00981">
    <property type="entry name" value="rpsL_bact"/>
    <property type="match status" value="1"/>
</dbReference>
<dbReference type="PANTHER" id="PTHR11652">
    <property type="entry name" value="30S RIBOSOMAL PROTEIN S12 FAMILY MEMBER"/>
    <property type="match status" value="1"/>
</dbReference>
<dbReference type="Pfam" id="PF00164">
    <property type="entry name" value="Ribosom_S12_S23"/>
    <property type="match status" value="1"/>
</dbReference>
<dbReference type="PIRSF" id="PIRSF002133">
    <property type="entry name" value="Ribosomal_S12/S23"/>
    <property type="match status" value="1"/>
</dbReference>
<dbReference type="PRINTS" id="PR01034">
    <property type="entry name" value="RIBOSOMALS12"/>
</dbReference>
<dbReference type="SUPFAM" id="SSF50249">
    <property type="entry name" value="Nucleic acid-binding proteins"/>
    <property type="match status" value="1"/>
</dbReference>
<dbReference type="PROSITE" id="PS00055">
    <property type="entry name" value="RIBOSOMAL_S12"/>
    <property type="match status" value="1"/>
</dbReference>
<comment type="function">
    <text evidence="2">With S4 and S5 plays an important role in translational accuracy.</text>
</comment>
<comment type="function">
    <text evidence="2">Interacts with and stabilizes bases of the 16S rRNA that are involved in tRNA selection in the A site and with the mRNA backbone. Located at the interface of the 30S and 50S subunits, it traverses the body of the 30S subunit contacting proteins on the other side and probably holding the rRNA structure together. The combined cluster of proteins S8, S12 and S17 appears to hold together the shoulder and platform of the 30S subunit.</text>
</comment>
<comment type="subunit">
    <text evidence="2">Part of the 30S ribosomal subunit. Contacts proteins S8 and S17. May interact with IF1 in the 30S initiation complex.</text>
</comment>
<comment type="similarity">
    <text evidence="2">Belongs to the universal ribosomal protein uS12 family.</text>
</comment>
<name>RS12_YERPG</name>
<evidence type="ECO:0000250" key="1"/>
<evidence type="ECO:0000255" key="2">
    <source>
        <dbReference type="HAMAP-Rule" id="MF_00403"/>
    </source>
</evidence>
<evidence type="ECO:0000305" key="3"/>